<gene>
    <name evidence="1" type="primary">glyS</name>
    <name type="ordered locus">TSIB_0954</name>
</gene>
<comment type="function">
    <text evidence="1">Catalyzes the attachment of glycine to tRNA(Gly).</text>
</comment>
<comment type="catalytic activity">
    <reaction evidence="1">
        <text>tRNA(Gly) + glycine + ATP = glycyl-tRNA(Gly) + AMP + diphosphate</text>
        <dbReference type="Rhea" id="RHEA:16013"/>
        <dbReference type="Rhea" id="RHEA-COMP:9664"/>
        <dbReference type="Rhea" id="RHEA-COMP:9683"/>
        <dbReference type="ChEBI" id="CHEBI:30616"/>
        <dbReference type="ChEBI" id="CHEBI:33019"/>
        <dbReference type="ChEBI" id="CHEBI:57305"/>
        <dbReference type="ChEBI" id="CHEBI:78442"/>
        <dbReference type="ChEBI" id="CHEBI:78522"/>
        <dbReference type="ChEBI" id="CHEBI:456215"/>
        <dbReference type="EC" id="6.1.1.14"/>
    </reaction>
</comment>
<comment type="subcellular location">
    <subcellularLocation>
        <location evidence="1">Cytoplasm</location>
    </subcellularLocation>
</comment>
<comment type="similarity">
    <text evidence="1">Belongs to the class-II aminoacyl-tRNA synthetase family.</text>
</comment>
<accession>C6A317</accession>
<dbReference type="EC" id="6.1.1.14" evidence="1"/>
<dbReference type="EMBL" id="CP001463">
    <property type="protein sequence ID" value="ACS90012.1"/>
    <property type="molecule type" value="Genomic_DNA"/>
</dbReference>
<dbReference type="SMR" id="C6A317"/>
<dbReference type="STRING" id="604354.TSIB_0954"/>
<dbReference type="KEGG" id="tsi:TSIB_0954"/>
<dbReference type="eggNOG" id="arCOG00405">
    <property type="taxonomic scope" value="Archaea"/>
</dbReference>
<dbReference type="HOGENOM" id="CLU_015515_1_0_2"/>
<dbReference type="Proteomes" id="UP000009079">
    <property type="component" value="Chromosome"/>
</dbReference>
<dbReference type="GO" id="GO:0005737">
    <property type="term" value="C:cytoplasm"/>
    <property type="evidence" value="ECO:0007669"/>
    <property type="project" value="UniProtKB-SubCell"/>
</dbReference>
<dbReference type="GO" id="GO:0005524">
    <property type="term" value="F:ATP binding"/>
    <property type="evidence" value="ECO:0007669"/>
    <property type="project" value="UniProtKB-UniRule"/>
</dbReference>
<dbReference type="GO" id="GO:0004820">
    <property type="term" value="F:glycine-tRNA ligase activity"/>
    <property type="evidence" value="ECO:0000250"/>
    <property type="project" value="UniProtKB"/>
</dbReference>
<dbReference type="GO" id="GO:0046983">
    <property type="term" value="F:protein dimerization activity"/>
    <property type="evidence" value="ECO:0000250"/>
    <property type="project" value="UniProtKB"/>
</dbReference>
<dbReference type="GO" id="GO:0006426">
    <property type="term" value="P:glycyl-tRNA aminoacylation"/>
    <property type="evidence" value="ECO:0007669"/>
    <property type="project" value="UniProtKB-UniRule"/>
</dbReference>
<dbReference type="CDD" id="cd00774">
    <property type="entry name" value="GlyRS-like_core"/>
    <property type="match status" value="1"/>
</dbReference>
<dbReference type="CDD" id="cd00858">
    <property type="entry name" value="GlyRS_anticodon"/>
    <property type="match status" value="1"/>
</dbReference>
<dbReference type="FunFam" id="3.30.40.230:FF:000005">
    <property type="entry name" value="Glycine--tRNA ligase"/>
    <property type="match status" value="1"/>
</dbReference>
<dbReference type="FunFam" id="3.30.930.10:FF:000091">
    <property type="entry name" value="Glycine--tRNA ligase"/>
    <property type="match status" value="1"/>
</dbReference>
<dbReference type="FunFam" id="3.30.930.10:FF:000179">
    <property type="entry name" value="Glycine--tRNA ligase"/>
    <property type="match status" value="1"/>
</dbReference>
<dbReference type="FunFam" id="3.40.50.800:FF:000002">
    <property type="entry name" value="Glycine--tRNA ligase"/>
    <property type="match status" value="1"/>
</dbReference>
<dbReference type="Gene3D" id="3.30.40.230">
    <property type="match status" value="1"/>
</dbReference>
<dbReference type="Gene3D" id="3.30.720.200">
    <property type="match status" value="1"/>
</dbReference>
<dbReference type="Gene3D" id="3.40.50.800">
    <property type="entry name" value="Anticodon-binding domain"/>
    <property type="match status" value="1"/>
</dbReference>
<dbReference type="Gene3D" id="3.30.930.10">
    <property type="entry name" value="Bira Bifunctional Protein, Domain 2"/>
    <property type="match status" value="1"/>
</dbReference>
<dbReference type="HAMAP" id="MF_00253_A">
    <property type="entry name" value="Gly_tRNA_synth_A"/>
    <property type="match status" value="1"/>
</dbReference>
<dbReference type="InterPro" id="IPR002314">
    <property type="entry name" value="aa-tRNA-synt_IIb"/>
</dbReference>
<dbReference type="InterPro" id="IPR006195">
    <property type="entry name" value="aa-tRNA-synth_II"/>
</dbReference>
<dbReference type="InterPro" id="IPR045864">
    <property type="entry name" value="aa-tRNA-synth_II/BPL/LPL"/>
</dbReference>
<dbReference type="InterPro" id="IPR004154">
    <property type="entry name" value="Anticodon-bd"/>
</dbReference>
<dbReference type="InterPro" id="IPR036621">
    <property type="entry name" value="Anticodon-bd_dom_sf"/>
</dbReference>
<dbReference type="InterPro" id="IPR027031">
    <property type="entry name" value="Gly-tRNA_synthase/POLG2"/>
</dbReference>
<dbReference type="InterPro" id="IPR022960">
    <property type="entry name" value="Gly_tRNA_ligase_arc"/>
</dbReference>
<dbReference type="InterPro" id="IPR033731">
    <property type="entry name" value="GlyRS-like_core"/>
</dbReference>
<dbReference type="InterPro" id="IPR002315">
    <property type="entry name" value="tRNA-synt_gly"/>
</dbReference>
<dbReference type="NCBIfam" id="TIGR00389">
    <property type="entry name" value="glyS_dimeric"/>
    <property type="match status" value="1"/>
</dbReference>
<dbReference type="NCBIfam" id="NF003211">
    <property type="entry name" value="PRK04173.1"/>
    <property type="match status" value="1"/>
</dbReference>
<dbReference type="PANTHER" id="PTHR10745:SF0">
    <property type="entry name" value="GLYCINE--TRNA LIGASE"/>
    <property type="match status" value="1"/>
</dbReference>
<dbReference type="PANTHER" id="PTHR10745">
    <property type="entry name" value="GLYCYL-TRNA SYNTHETASE/DNA POLYMERASE SUBUNIT GAMMA-2"/>
    <property type="match status" value="1"/>
</dbReference>
<dbReference type="Pfam" id="PF03129">
    <property type="entry name" value="HGTP_anticodon"/>
    <property type="match status" value="1"/>
</dbReference>
<dbReference type="Pfam" id="PF00587">
    <property type="entry name" value="tRNA-synt_2b"/>
    <property type="match status" value="1"/>
</dbReference>
<dbReference type="PRINTS" id="PR01043">
    <property type="entry name" value="TRNASYNTHGLY"/>
</dbReference>
<dbReference type="SUPFAM" id="SSF52954">
    <property type="entry name" value="Class II aaRS ABD-related"/>
    <property type="match status" value="1"/>
</dbReference>
<dbReference type="SUPFAM" id="SSF55681">
    <property type="entry name" value="Class II aaRS and biotin synthetases"/>
    <property type="match status" value="1"/>
</dbReference>
<dbReference type="PROSITE" id="PS50862">
    <property type="entry name" value="AA_TRNA_LIGASE_II"/>
    <property type="match status" value="1"/>
</dbReference>
<keyword id="KW-0030">Aminoacyl-tRNA synthetase</keyword>
<keyword id="KW-0067">ATP-binding</keyword>
<keyword id="KW-0963">Cytoplasm</keyword>
<keyword id="KW-0436">Ligase</keyword>
<keyword id="KW-0547">Nucleotide-binding</keyword>
<keyword id="KW-0648">Protein biosynthesis</keyword>
<keyword id="KW-1185">Reference proteome</keyword>
<name>SYG_THESM</name>
<evidence type="ECO:0000255" key="1">
    <source>
        <dbReference type="HAMAP-Rule" id="MF_00253"/>
    </source>
</evidence>
<reference key="1">
    <citation type="journal article" date="2009" name="Appl. Environ. Microbiol.">
        <title>Metabolic versatility and indigenous origin of the archaeon Thermococcus sibiricus, isolated from a siberian oil reservoir, as revealed by genome analysis.</title>
        <authorList>
            <person name="Mardanov A.V."/>
            <person name="Ravin N.V."/>
            <person name="Svetlitchnyi V.A."/>
            <person name="Beletsky A.V."/>
            <person name="Miroshnichenko M.L."/>
            <person name="Bonch-Osmolovskaya E.A."/>
            <person name="Skryabin K.G."/>
        </authorList>
    </citation>
    <scope>NUCLEOTIDE SEQUENCE [LARGE SCALE GENOMIC DNA]</scope>
    <source>
        <strain>DSM 12597 / MM 739</strain>
    </source>
</reference>
<sequence length="570" mass="66631">MVIMVDKYEALQDLMRRRGFVWSSFEIYGGARGFYDYGPLGAIIKRKIEKKIREAFIREGFFEIETPDITPEEVFIASGHVDKFVDPLTECKKCGSRFRADHIVEEVLGIDTEGLSAEHLTQLIREHDIKCPECGGELADVWYFNLMFETYIGPYKDKKGYLRPETAQGIFVNFKRLNNFARNQLPFGVFQIGKAYRNEISPRQGMLRLREFSQAEVEIFFDPKQKEHPHFEEVKDEVLRFYPIENQLKNLGMIELTLDEAVKKGYVMNTFFAYYMAMVKRILLDIGIPANKIRFRQQLPEERAHYSSDTWDVEIHSERFGWIECVGIAYRGNYDLSRHVKESGADLTVMIHYKEPKIIKKLKISLNMKRVGPKLKGDAKRINQKLQEMTQEELKKIFEGLEKIGKVFLDGYELEKEDFIIKEVEEKVHGEKLVPHVLEPSFGIDRPFYLLLENSIVMDEDSRVYLKIKKDMAPIEVAVLPLVAKEPLTSIAYEIFRTLQKEGFIVVYDEKDTVGRRYARYDEIGTPYCVTIDNQTPEDNTVTIRDRDTREQIRVKIEELPEKLRELIFG</sequence>
<proteinExistence type="inferred from homology"/>
<feature type="chain" id="PRO_1000204583" description="Glycine--tRNA ligase">
    <location>
        <begin position="1"/>
        <end position="570"/>
    </location>
</feature>
<feature type="binding site" evidence="1">
    <location>
        <position position="99"/>
    </location>
    <ligand>
        <name>substrate</name>
    </ligand>
</feature>
<feature type="binding site" evidence="1">
    <location>
        <position position="165"/>
    </location>
    <ligand>
        <name>substrate</name>
    </ligand>
</feature>
<feature type="binding site" evidence="1">
    <location>
        <begin position="197"/>
        <end position="199"/>
    </location>
    <ligand>
        <name>ATP</name>
        <dbReference type="ChEBI" id="CHEBI:30616"/>
    </ligand>
</feature>
<feature type="binding site" evidence="1">
    <location>
        <begin position="207"/>
        <end position="212"/>
    </location>
    <ligand>
        <name>ATP</name>
        <dbReference type="ChEBI" id="CHEBI:30616"/>
    </ligand>
</feature>
<feature type="binding site" evidence="1">
    <location>
        <begin position="212"/>
        <end position="216"/>
    </location>
    <ligand>
        <name>substrate</name>
    </ligand>
</feature>
<feature type="binding site" evidence="1">
    <location>
        <begin position="324"/>
        <end position="325"/>
    </location>
    <ligand>
        <name>ATP</name>
        <dbReference type="ChEBI" id="CHEBI:30616"/>
    </ligand>
</feature>
<feature type="binding site" evidence="1">
    <location>
        <begin position="439"/>
        <end position="443"/>
    </location>
    <ligand>
        <name>substrate</name>
    </ligand>
</feature>
<feature type="binding site" evidence="1">
    <location>
        <begin position="443"/>
        <end position="446"/>
    </location>
    <ligand>
        <name>ATP</name>
        <dbReference type="ChEBI" id="CHEBI:30616"/>
    </ligand>
</feature>
<protein>
    <recommendedName>
        <fullName evidence="1">Glycine--tRNA ligase</fullName>
        <ecNumber evidence="1">6.1.1.14</ecNumber>
    </recommendedName>
    <alternativeName>
        <fullName evidence="1">Glycyl-tRNA synthetase</fullName>
        <shortName evidence="1">GlyRS</shortName>
    </alternativeName>
</protein>
<organism>
    <name type="scientific">Thermococcus sibiricus (strain DSM 12597 / MM 739)</name>
    <dbReference type="NCBI Taxonomy" id="604354"/>
    <lineage>
        <taxon>Archaea</taxon>
        <taxon>Methanobacteriati</taxon>
        <taxon>Methanobacteriota</taxon>
        <taxon>Thermococci</taxon>
        <taxon>Thermococcales</taxon>
        <taxon>Thermococcaceae</taxon>
        <taxon>Thermococcus</taxon>
    </lineage>
</organism>